<gene>
    <name evidence="1" type="primary">sufE</name>
    <name type="ordered locus">plu2617</name>
</gene>
<reference key="1">
    <citation type="journal article" date="2003" name="Nat. Biotechnol.">
        <title>The genome sequence of the entomopathogenic bacterium Photorhabdus luminescens.</title>
        <authorList>
            <person name="Duchaud E."/>
            <person name="Rusniok C."/>
            <person name="Frangeul L."/>
            <person name="Buchrieser C."/>
            <person name="Givaudan A."/>
            <person name="Taourit S."/>
            <person name="Bocs S."/>
            <person name="Boursaux-Eude C."/>
            <person name="Chandler M."/>
            <person name="Charles J.-F."/>
            <person name="Dassa E."/>
            <person name="Derose R."/>
            <person name="Derzelle S."/>
            <person name="Freyssinet G."/>
            <person name="Gaudriault S."/>
            <person name="Medigue C."/>
            <person name="Lanois A."/>
            <person name="Powell K."/>
            <person name="Siguier P."/>
            <person name="Vincent R."/>
            <person name="Wingate V."/>
            <person name="Zouine M."/>
            <person name="Glaser P."/>
            <person name="Boemare N."/>
            <person name="Danchin A."/>
            <person name="Kunst F."/>
        </authorList>
    </citation>
    <scope>NUCLEOTIDE SEQUENCE [LARGE SCALE GENOMIC DNA]</scope>
    <source>
        <strain>DSM 15139 / CIP 105565 / TT01</strain>
    </source>
</reference>
<comment type="function">
    <text evidence="1">Participates in cysteine desulfuration mediated by SufS. Cysteine desulfuration mobilizes sulfur from L-cysteine to yield L-alanine and constitutes an essential step in sulfur metabolism for biosynthesis of a variety of sulfur-containing biomolecules. Functions as a sulfur acceptor for SufS, by mediating the direct transfer of the sulfur atom from the S-sulfanylcysteine of SufS, an intermediate product of cysteine desulfuration process.</text>
</comment>
<comment type="pathway">
    <text evidence="1">Cofactor biosynthesis; iron-sulfur cluster biosynthesis.</text>
</comment>
<comment type="subunit">
    <text evidence="1">Homodimer. Interacts with SufS.</text>
</comment>
<comment type="subcellular location">
    <subcellularLocation>
        <location evidence="1">Cytoplasm</location>
    </subcellularLocation>
</comment>
<comment type="similarity">
    <text evidence="1">Belongs to the SufE family.</text>
</comment>
<protein>
    <recommendedName>
        <fullName evidence="1">Cysteine desulfuration protein SufE</fullName>
    </recommendedName>
</protein>
<evidence type="ECO:0000255" key="1">
    <source>
        <dbReference type="HAMAP-Rule" id="MF_01832"/>
    </source>
</evidence>
<accession>Q7N3U6</accession>
<name>SUFE_PHOLL</name>
<feature type="chain" id="PRO_0000202129" description="Cysteine desulfuration protein SufE">
    <location>
        <begin position="1"/>
        <end position="138"/>
    </location>
</feature>
<feature type="active site" description="Cysteine persulfide intermediate" evidence="1">
    <location>
        <position position="51"/>
    </location>
</feature>
<keyword id="KW-0963">Cytoplasm</keyword>
<keyword id="KW-1185">Reference proteome</keyword>
<dbReference type="EMBL" id="BX571867">
    <property type="protein sequence ID" value="CAE14991.1"/>
    <property type="molecule type" value="Genomic_DNA"/>
</dbReference>
<dbReference type="RefSeq" id="WP_011146839.1">
    <property type="nucleotide sequence ID" value="NC_005126.1"/>
</dbReference>
<dbReference type="SMR" id="Q7N3U6"/>
<dbReference type="STRING" id="243265.plu2617"/>
<dbReference type="GeneID" id="48848877"/>
<dbReference type="KEGG" id="plu:plu2617"/>
<dbReference type="eggNOG" id="COG2166">
    <property type="taxonomic scope" value="Bacteria"/>
</dbReference>
<dbReference type="HOGENOM" id="CLU_124502_1_1_6"/>
<dbReference type="OrthoDB" id="9799320at2"/>
<dbReference type="UniPathway" id="UPA00266"/>
<dbReference type="Proteomes" id="UP000002514">
    <property type="component" value="Chromosome"/>
</dbReference>
<dbReference type="GO" id="GO:0005737">
    <property type="term" value="C:cytoplasm"/>
    <property type="evidence" value="ECO:0007669"/>
    <property type="project" value="UniProtKB-SubCell"/>
</dbReference>
<dbReference type="GO" id="GO:0016226">
    <property type="term" value="P:iron-sulfur cluster assembly"/>
    <property type="evidence" value="ECO:0007669"/>
    <property type="project" value="InterPro"/>
</dbReference>
<dbReference type="GO" id="GO:0006790">
    <property type="term" value="P:sulfur compound metabolic process"/>
    <property type="evidence" value="ECO:0007669"/>
    <property type="project" value="InterPro"/>
</dbReference>
<dbReference type="Gene3D" id="3.90.1010.10">
    <property type="match status" value="1"/>
</dbReference>
<dbReference type="HAMAP" id="MF_01832">
    <property type="entry name" value="SufE"/>
    <property type="match status" value="1"/>
</dbReference>
<dbReference type="InterPro" id="IPR023939">
    <property type="entry name" value="Cysteine_desulfuration_SufE"/>
</dbReference>
<dbReference type="InterPro" id="IPR003808">
    <property type="entry name" value="Fe-S_metab-assoc_dom"/>
</dbReference>
<dbReference type="NCBIfam" id="NF006792">
    <property type="entry name" value="PRK09296.1"/>
    <property type="match status" value="1"/>
</dbReference>
<dbReference type="PANTHER" id="PTHR43597:SF3">
    <property type="entry name" value="CYSTEINE DESULFURATION PROTEIN SUFE"/>
    <property type="match status" value="1"/>
</dbReference>
<dbReference type="PANTHER" id="PTHR43597">
    <property type="entry name" value="SULFUR ACCEPTOR PROTEIN CSDE"/>
    <property type="match status" value="1"/>
</dbReference>
<dbReference type="Pfam" id="PF02657">
    <property type="entry name" value="SufE"/>
    <property type="match status" value="1"/>
</dbReference>
<dbReference type="SUPFAM" id="SSF82649">
    <property type="entry name" value="SufE/NifU"/>
    <property type="match status" value="1"/>
</dbReference>
<sequence>MASLPDTNKLLRNFSRCRNWEERYLYMIELGAKLPPLTDEQRQPENLIAGCQSQVWILLRMNHQNKVEFIGDSDAAIVKGLVAIVFILFQGKTTQEILDLDVTEYFGKLSLEQHLTPSRTQGLHAMIHAIRNRTSKMV</sequence>
<proteinExistence type="inferred from homology"/>
<organism>
    <name type="scientific">Photorhabdus laumondii subsp. laumondii (strain DSM 15139 / CIP 105565 / TT01)</name>
    <name type="common">Photorhabdus luminescens subsp. laumondii</name>
    <dbReference type="NCBI Taxonomy" id="243265"/>
    <lineage>
        <taxon>Bacteria</taxon>
        <taxon>Pseudomonadati</taxon>
        <taxon>Pseudomonadota</taxon>
        <taxon>Gammaproteobacteria</taxon>
        <taxon>Enterobacterales</taxon>
        <taxon>Morganellaceae</taxon>
        <taxon>Photorhabdus</taxon>
    </lineage>
</organism>